<protein>
    <recommendedName>
        <fullName evidence="1">Small ribosomal subunit protein bS6</fullName>
    </recommendedName>
    <alternativeName>
        <fullName evidence="2">30S ribosomal protein S6</fullName>
    </alternativeName>
</protein>
<dbReference type="EMBL" id="CR767821">
    <property type="protein sequence ID" value="CAH58419.1"/>
    <property type="molecule type" value="Genomic_DNA"/>
</dbReference>
<dbReference type="EMBL" id="CR925678">
    <property type="protein sequence ID" value="CAI27216.1"/>
    <property type="molecule type" value="Genomic_DNA"/>
</dbReference>
<dbReference type="RefSeq" id="WP_011155366.1">
    <property type="nucleotide sequence ID" value="NC_005295.2"/>
</dbReference>
<dbReference type="SMR" id="Q5HAJ4"/>
<dbReference type="GeneID" id="33058049"/>
<dbReference type="KEGG" id="eru:Erum6870"/>
<dbReference type="KEGG" id="erw:ERWE_CDS_07220"/>
<dbReference type="eggNOG" id="COG0360">
    <property type="taxonomic scope" value="Bacteria"/>
</dbReference>
<dbReference type="HOGENOM" id="CLU_113441_5_3_5"/>
<dbReference type="Proteomes" id="UP000001021">
    <property type="component" value="Chromosome"/>
</dbReference>
<dbReference type="GO" id="GO:0005737">
    <property type="term" value="C:cytoplasm"/>
    <property type="evidence" value="ECO:0007669"/>
    <property type="project" value="UniProtKB-ARBA"/>
</dbReference>
<dbReference type="GO" id="GO:1990904">
    <property type="term" value="C:ribonucleoprotein complex"/>
    <property type="evidence" value="ECO:0007669"/>
    <property type="project" value="UniProtKB-KW"/>
</dbReference>
<dbReference type="GO" id="GO:0005840">
    <property type="term" value="C:ribosome"/>
    <property type="evidence" value="ECO:0007669"/>
    <property type="project" value="UniProtKB-KW"/>
</dbReference>
<dbReference type="GO" id="GO:0070181">
    <property type="term" value="F:small ribosomal subunit rRNA binding"/>
    <property type="evidence" value="ECO:0007669"/>
    <property type="project" value="TreeGrafter"/>
</dbReference>
<dbReference type="GO" id="GO:0003735">
    <property type="term" value="F:structural constituent of ribosome"/>
    <property type="evidence" value="ECO:0007669"/>
    <property type="project" value="InterPro"/>
</dbReference>
<dbReference type="GO" id="GO:0006412">
    <property type="term" value="P:translation"/>
    <property type="evidence" value="ECO:0007669"/>
    <property type="project" value="UniProtKB-UniRule"/>
</dbReference>
<dbReference type="CDD" id="cd00473">
    <property type="entry name" value="bS6"/>
    <property type="match status" value="1"/>
</dbReference>
<dbReference type="Gene3D" id="3.30.70.60">
    <property type="match status" value="1"/>
</dbReference>
<dbReference type="HAMAP" id="MF_00360">
    <property type="entry name" value="Ribosomal_bS6"/>
    <property type="match status" value="1"/>
</dbReference>
<dbReference type="InterPro" id="IPR000529">
    <property type="entry name" value="Ribosomal_bS6"/>
</dbReference>
<dbReference type="InterPro" id="IPR035980">
    <property type="entry name" value="Ribosomal_bS6_sf"/>
</dbReference>
<dbReference type="InterPro" id="IPR020814">
    <property type="entry name" value="Ribosomal_S6_plastid/chlpt"/>
</dbReference>
<dbReference type="InterPro" id="IPR014717">
    <property type="entry name" value="Transl_elong_EF1B/ribsomal_bS6"/>
</dbReference>
<dbReference type="NCBIfam" id="TIGR00166">
    <property type="entry name" value="S6"/>
    <property type="match status" value="1"/>
</dbReference>
<dbReference type="PANTHER" id="PTHR21011">
    <property type="entry name" value="MITOCHONDRIAL 28S RIBOSOMAL PROTEIN S6"/>
    <property type="match status" value="1"/>
</dbReference>
<dbReference type="PANTHER" id="PTHR21011:SF1">
    <property type="entry name" value="SMALL RIBOSOMAL SUBUNIT PROTEIN BS6M"/>
    <property type="match status" value="1"/>
</dbReference>
<dbReference type="Pfam" id="PF01250">
    <property type="entry name" value="Ribosomal_S6"/>
    <property type="match status" value="1"/>
</dbReference>
<dbReference type="SUPFAM" id="SSF54995">
    <property type="entry name" value="Ribosomal protein S6"/>
    <property type="match status" value="1"/>
</dbReference>
<comment type="function">
    <text evidence="1">Binds together with bS18 to 16S ribosomal RNA.</text>
</comment>
<comment type="similarity">
    <text evidence="1">Belongs to the bacterial ribosomal protein bS6 family.</text>
</comment>
<evidence type="ECO:0000255" key="1">
    <source>
        <dbReference type="HAMAP-Rule" id="MF_00360"/>
    </source>
</evidence>
<evidence type="ECO:0000305" key="2"/>
<name>RS6_EHRRW</name>
<feature type="chain" id="PRO_0000229542" description="Small ribosomal subunit protein bS6">
    <location>
        <begin position="1"/>
        <end position="109"/>
    </location>
</feature>
<proteinExistence type="inferred from homology"/>
<gene>
    <name evidence="1" type="primary">rpsF</name>
    <name type="ordered locus">Erum6870</name>
    <name type="ordered locus">ERWE_CDS_07220</name>
</gene>
<reference key="1">
    <citation type="journal article" date="2005" name="Proc. Natl. Acad. Sci. U.S.A.">
        <title>The genome of the heartwater agent Ehrlichia ruminantium contains multiple tandem repeats of actively variable copy number.</title>
        <authorList>
            <person name="Collins N.E."/>
            <person name="Liebenberg J."/>
            <person name="de Villiers E.P."/>
            <person name="Brayton K.A."/>
            <person name="Louw E."/>
            <person name="Pretorius A."/>
            <person name="Faber F.E."/>
            <person name="van Heerden H."/>
            <person name="Josemans A."/>
            <person name="van Kleef M."/>
            <person name="Steyn H.C."/>
            <person name="van Strijp M.F."/>
            <person name="Zweygarth E."/>
            <person name="Jongejan F."/>
            <person name="Maillard J.C."/>
            <person name="Berthier D."/>
            <person name="Botha M."/>
            <person name="Joubert F."/>
            <person name="Corton C.H."/>
            <person name="Thomson N.R."/>
            <person name="Allsopp M.T."/>
            <person name="Allsopp B.A."/>
        </authorList>
    </citation>
    <scope>NUCLEOTIDE SEQUENCE [LARGE SCALE GENOMIC DNA]</scope>
    <source>
        <strain>Welgevonden</strain>
    </source>
</reference>
<reference key="2">
    <citation type="journal article" date="2006" name="J. Bacteriol.">
        <title>Comparative genomic analysis of three strains of Ehrlichia ruminantium reveals an active process of genome size plasticity.</title>
        <authorList>
            <person name="Frutos R."/>
            <person name="Viari A."/>
            <person name="Ferraz C."/>
            <person name="Morgat A."/>
            <person name="Eychenie S."/>
            <person name="Kandassamy Y."/>
            <person name="Chantal I."/>
            <person name="Bensaid A."/>
            <person name="Coissac E."/>
            <person name="Vachiery N."/>
            <person name="Demaille J."/>
            <person name="Martinez D."/>
        </authorList>
    </citation>
    <scope>NUCLEOTIDE SEQUENCE [LARGE SCALE GENOMIC DNA]</scope>
    <source>
        <strain>Welgevonden</strain>
    </source>
</reference>
<accession>Q5HAJ4</accession>
<accession>Q5FDE6</accession>
<sequence length="109" mass="12635">MPLYEFTFIAQQGLTQYELEGLVKGLSSLLTKNGAELLKYEYWGLLDFAYAIDKMNKGHYCMMYIRSSSTSMDEFKRKVRLNEDVLRFLCLKRDKLPEGDSLMVQASQA</sequence>
<organism>
    <name type="scientific">Ehrlichia ruminantium (strain Welgevonden)</name>
    <dbReference type="NCBI Taxonomy" id="254945"/>
    <lineage>
        <taxon>Bacteria</taxon>
        <taxon>Pseudomonadati</taxon>
        <taxon>Pseudomonadota</taxon>
        <taxon>Alphaproteobacteria</taxon>
        <taxon>Rickettsiales</taxon>
        <taxon>Anaplasmataceae</taxon>
        <taxon>Ehrlichia</taxon>
    </lineage>
</organism>
<keyword id="KW-0687">Ribonucleoprotein</keyword>
<keyword id="KW-0689">Ribosomal protein</keyword>
<keyword id="KW-0694">RNA-binding</keyword>
<keyword id="KW-0699">rRNA-binding</keyword>